<name>SPI1_VACCC</name>
<organism>
    <name type="scientific">Vaccinia virus (strain Copenhagen)</name>
    <name type="common">VACV</name>
    <dbReference type="NCBI Taxonomy" id="10249"/>
    <lineage>
        <taxon>Viruses</taxon>
        <taxon>Varidnaviria</taxon>
        <taxon>Bamfordvirae</taxon>
        <taxon>Nucleocytoviricota</taxon>
        <taxon>Pokkesviricetes</taxon>
        <taxon>Chitovirales</taxon>
        <taxon>Poxviridae</taxon>
        <taxon>Chordopoxvirinae</taxon>
        <taxon>Orthopoxvirus</taxon>
        <taxon>Vaccinia virus</taxon>
    </lineage>
</organism>
<sequence length="353" mass="40387">MDIFKELIVKHPDENVLISPVSILSTLSILNHGAAGSTAEQLSKYIENMNENTPDDNNDMDVDIPYCATLATANKIYGSDSIEFHASFLQKIKDDFQTVNFNNANQTKELINEWVKTMTNGKINSLLTSPLSINTRMTVVSAVHFKAMWKYPFSKHLTYTDKFYISKNIVTSVDMMVGTENNLQYVHINELFGGFSIIDIPYEGNSSMVIILPDDIEGIYNIEKNITDEKFKKWCGMLSTKSIDLYMPKFKVEMTEPYNLVPILENLGLTNIFGYYADFSKMCNETITVEKFLHTTFIDVNEEYTEASAVTGVFTINFSMVYRTKVYINHPFMYMIKDTTGRILFIGKYCYPQ</sequence>
<dbReference type="EMBL" id="M35027">
    <property type="protein sequence ID" value="AAA47984.1"/>
    <property type="molecule type" value="Genomic_DNA"/>
</dbReference>
<dbReference type="PIR" id="B42503">
    <property type="entry name" value="WMVZ2C"/>
</dbReference>
<dbReference type="SMR" id="P20531"/>
<dbReference type="MEROPS" id="I04.028"/>
<dbReference type="Proteomes" id="UP000008269">
    <property type="component" value="Segment"/>
</dbReference>
<dbReference type="GO" id="GO:0005615">
    <property type="term" value="C:extracellular space"/>
    <property type="evidence" value="ECO:0007669"/>
    <property type="project" value="InterPro"/>
</dbReference>
<dbReference type="GO" id="GO:0030430">
    <property type="term" value="C:host cell cytoplasm"/>
    <property type="evidence" value="ECO:0007669"/>
    <property type="project" value="UniProtKB-SubCell"/>
</dbReference>
<dbReference type="GO" id="GO:0004867">
    <property type="term" value="F:serine-type endopeptidase inhibitor activity"/>
    <property type="evidence" value="ECO:0007669"/>
    <property type="project" value="UniProtKB-KW"/>
</dbReference>
<dbReference type="CDD" id="cd19583">
    <property type="entry name" value="serpinN_SPI-1_SPI-2"/>
    <property type="match status" value="1"/>
</dbReference>
<dbReference type="Gene3D" id="2.30.39.10">
    <property type="entry name" value="Alpha-1-antitrypsin, domain 1"/>
    <property type="match status" value="1"/>
</dbReference>
<dbReference type="Gene3D" id="3.30.497.10">
    <property type="entry name" value="Antithrombin, subunit I, domain 2"/>
    <property type="match status" value="1"/>
</dbReference>
<dbReference type="InterPro" id="IPR023795">
    <property type="entry name" value="Serpin_CS"/>
</dbReference>
<dbReference type="InterPro" id="IPR023796">
    <property type="entry name" value="Serpin_dom"/>
</dbReference>
<dbReference type="InterPro" id="IPR000215">
    <property type="entry name" value="Serpin_fam"/>
</dbReference>
<dbReference type="InterPro" id="IPR036186">
    <property type="entry name" value="Serpin_sf"/>
</dbReference>
<dbReference type="InterPro" id="IPR042178">
    <property type="entry name" value="Serpin_sf_1"/>
</dbReference>
<dbReference type="InterPro" id="IPR042185">
    <property type="entry name" value="Serpin_sf_2"/>
</dbReference>
<dbReference type="PANTHER" id="PTHR11461:SF211">
    <property type="entry name" value="GH10112P-RELATED"/>
    <property type="match status" value="1"/>
</dbReference>
<dbReference type="PANTHER" id="PTHR11461">
    <property type="entry name" value="SERINE PROTEASE INHIBITOR, SERPIN"/>
    <property type="match status" value="1"/>
</dbReference>
<dbReference type="Pfam" id="PF00079">
    <property type="entry name" value="Serpin"/>
    <property type="match status" value="1"/>
</dbReference>
<dbReference type="SMART" id="SM00093">
    <property type="entry name" value="SERPIN"/>
    <property type="match status" value="1"/>
</dbReference>
<dbReference type="SUPFAM" id="SSF56574">
    <property type="entry name" value="Serpins"/>
    <property type="match status" value="1"/>
</dbReference>
<dbReference type="PROSITE" id="PS00284">
    <property type="entry name" value="SERPIN"/>
    <property type="match status" value="1"/>
</dbReference>
<feature type="chain" id="PRO_0000094135" description="Serine proteinase inhibitor 1">
    <location>
        <begin position="1"/>
        <end position="353"/>
    </location>
</feature>
<feature type="site" description="Reactive bond" evidence="1">
    <location>
        <begin position="318"/>
        <end position="319"/>
    </location>
</feature>
<evidence type="ECO:0000250" key="1"/>
<evidence type="ECO:0000250" key="2">
    <source>
        <dbReference type="UniProtKB" id="P15058"/>
    </source>
</evidence>
<evidence type="ECO:0000305" key="3"/>
<proteinExistence type="inferred from homology"/>
<gene>
    <name type="primary">OPG208</name>
    <name type="synonym">SPI-1</name>
    <name type="ORF">C12L</name>
</gene>
<accession>P20531</accession>
<protein>
    <recommendedName>
        <fullName>Serine proteinase inhibitor 1</fullName>
        <shortName>Serp-1</shortName>
        <shortName>Serpin-1</shortName>
    </recommendedName>
</protein>
<reference key="1">
    <citation type="journal article" date="1990" name="Virology">
        <title>The complete DNA sequence of vaccinia virus.</title>
        <authorList>
            <person name="Goebel S.J."/>
            <person name="Johnson G.P."/>
            <person name="Perkus M.E."/>
            <person name="Davis S.W."/>
            <person name="Winslow J.P."/>
            <person name="Paoletti E."/>
        </authorList>
    </citation>
    <scope>NUCLEOTIDE SEQUENCE [LARGE SCALE GENOMIC DNA]</scope>
</reference>
<reference key="2">
    <citation type="journal article" date="1990" name="Virology">
        <title>Appendix to 'The complete DNA sequence of vaccinia virus'.</title>
        <authorList>
            <person name="Goebel S.J."/>
            <person name="Johnson G.P."/>
            <person name="Perkus M.E."/>
            <person name="Davis S.W."/>
            <person name="Winslow J.P."/>
            <person name="Paoletti E."/>
        </authorList>
    </citation>
    <scope>COMPLETE GENOME</scope>
</reference>
<comment type="function">
    <text evidence="2">Plays a role in mediating viral host range. May act to inhibit a caspase independent form of apoptosis to allow efficient virus replication in infected cells.</text>
</comment>
<comment type="subcellular location">
    <subcellularLocation>
        <location evidence="2">Host cytoplasm</location>
    </subcellularLocation>
</comment>
<comment type="similarity">
    <text evidence="3">Belongs to the serpin family. Poxviruses subfamily.</text>
</comment>
<organismHost>
    <name type="scientific">Homo sapiens</name>
    <name type="common">Human</name>
    <dbReference type="NCBI Taxonomy" id="9606"/>
</organismHost>
<keyword id="KW-0244">Early protein</keyword>
<keyword id="KW-1035">Host cytoplasm</keyword>
<keyword id="KW-0646">Protease inhibitor</keyword>
<keyword id="KW-1185">Reference proteome</keyword>
<keyword id="KW-0722">Serine protease inhibitor</keyword>